<feature type="chain" id="PRO_1000065119" description="Ornithine carbamoyltransferase">
    <location>
        <begin position="1"/>
        <end position="337"/>
    </location>
</feature>
<feature type="binding site" evidence="2">
    <location>
        <begin position="56"/>
        <end position="59"/>
    </location>
    <ligand>
        <name>carbamoyl phosphate</name>
        <dbReference type="ChEBI" id="CHEBI:58228"/>
    </ligand>
</feature>
<feature type="binding site" evidence="2">
    <location>
        <position position="83"/>
    </location>
    <ligand>
        <name>carbamoyl phosphate</name>
        <dbReference type="ChEBI" id="CHEBI:58228"/>
    </ligand>
</feature>
<feature type="binding site" evidence="2">
    <location>
        <position position="107"/>
    </location>
    <ligand>
        <name>carbamoyl phosphate</name>
        <dbReference type="ChEBI" id="CHEBI:58228"/>
    </ligand>
</feature>
<feature type="binding site" evidence="2">
    <location>
        <begin position="134"/>
        <end position="137"/>
    </location>
    <ligand>
        <name>carbamoyl phosphate</name>
        <dbReference type="ChEBI" id="CHEBI:58228"/>
    </ligand>
</feature>
<feature type="binding site" evidence="2">
    <location>
        <position position="168"/>
    </location>
    <ligand>
        <name>L-ornithine</name>
        <dbReference type="ChEBI" id="CHEBI:46911"/>
    </ligand>
</feature>
<feature type="binding site" evidence="2">
    <location>
        <position position="232"/>
    </location>
    <ligand>
        <name>L-ornithine</name>
        <dbReference type="ChEBI" id="CHEBI:46911"/>
    </ligand>
</feature>
<feature type="binding site" evidence="2">
    <location>
        <begin position="236"/>
        <end position="237"/>
    </location>
    <ligand>
        <name>L-ornithine</name>
        <dbReference type="ChEBI" id="CHEBI:46911"/>
    </ligand>
</feature>
<feature type="binding site" evidence="2">
    <location>
        <begin position="274"/>
        <end position="275"/>
    </location>
    <ligand>
        <name>carbamoyl phosphate</name>
        <dbReference type="ChEBI" id="CHEBI:58228"/>
    </ligand>
</feature>
<feature type="binding site" evidence="2">
    <location>
        <position position="320"/>
    </location>
    <ligand>
        <name>carbamoyl phosphate</name>
        <dbReference type="ChEBI" id="CHEBI:58228"/>
    </ligand>
</feature>
<sequence length="337" mass="37219">MSGFYHKHFLKLLDFTPAELNSLLQLAAKLKADKKSGKEEAKLTGKNIALIFEKDSTRTRCSFEVAAYDQGARVTYLGPSGSQIGHKESIKDTARVLGRMYDGIQYRGYGQEIVETLAEYAGVPVWNGLTNEFHPTQLLADLLTMQEHLPGKAFNEMTLVYAGDARNNMGNSMLEAAALTGLDLRLVAPQACWPEAALVTECRAQAQQNGGNITLTEDVAKGVEGADFIYTDVWVSMGEAKEKWAERIALLRDYQVNSKMMQLTGNPEVKFLHCLPAFHDDQTTLGKKMAEEFGLHGGMEVTDEVFESAASIVFDQAENRMHTIKAVMVATLSKLNN</sequence>
<keyword id="KW-0028">Amino-acid biosynthesis</keyword>
<keyword id="KW-0055">Arginine biosynthesis</keyword>
<keyword id="KW-0963">Cytoplasm</keyword>
<keyword id="KW-0808">Transferase</keyword>
<name>OTC_SHIF8</name>
<organism>
    <name type="scientific">Shigella flexneri serotype 5b (strain 8401)</name>
    <dbReference type="NCBI Taxonomy" id="373384"/>
    <lineage>
        <taxon>Bacteria</taxon>
        <taxon>Pseudomonadati</taxon>
        <taxon>Pseudomonadota</taxon>
        <taxon>Gammaproteobacteria</taxon>
        <taxon>Enterobacterales</taxon>
        <taxon>Enterobacteriaceae</taxon>
        <taxon>Shigella</taxon>
    </lineage>
</organism>
<evidence type="ECO:0000250" key="1"/>
<evidence type="ECO:0000255" key="2">
    <source>
        <dbReference type="HAMAP-Rule" id="MF_01109"/>
    </source>
</evidence>
<reference key="1">
    <citation type="journal article" date="2006" name="BMC Genomics">
        <title>Complete genome sequence of Shigella flexneri 5b and comparison with Shigella flexneri 2a.</title>
        <authorList>
            <person name="Nie H."/>
            <person name="Yang F."/>
            <person name="Zhang X."/>
            <person name="Yang J."/>
            <person name="Chen L."/>
            <person name="Wang J."/>
            <person name="Xiong Z."/>
            <person name="Peng J."/>
            <person name="Sun L."/>
            <person name="Dong J."/>
            <person name="Xue Y."/>
            <person name="Xu X."/>
            <person name="Chen S."/>
            <person name="Yao Z."/>
            <person name="Shen Y."/>
            <person name="Jin Q."/>
        </authorList>
    </citation>
    <scope>NUCLEOTIDE SEQUENCE [LARGE SCALE GENOMIC DNA]</scope>
    <source>
        <strain>8401</strain>
    </source>
</reference>
<comment type="function">
    <text evidence="1">Reversibly catalyzes the transfer of the carbamoyl group from carbamoyl phosphate (CP) to the N(epsilon) atom of ornithine (ORN) to produce L-citrulline.</text>
</comment>
<comment type="catalytic activity">
    <reaction evidence="2">
        <text>carbamoyl phosphate + L-ornithine = L-citrulline + phosphate + H(+)</text>
        <dbReference type="Rhea" id="RHEA:19513"/>
        <dbReference type="ChEBI" id="CHEBI:15378"/>
        <dbReference type="ChEBI" id="CHEBI:43474"/>
        <dbReference type="ChEBI" id="CHEBI:46911"/>
        <dbReference type="ChEBI" id="CHEBI:57743"/>
        <dbReference type="ChEBI" id="CHEBI:58228"/>
        <dbReference type="EC" id="2.1.3.3"/>
    </reaction>
</comment>
<comment type="pathway">
    <text evidence="2">Amino-acid biosynthesis; L-arginine biosynthesis; L-arginine from L-ornithine and carbamoyl phosphate: step 1/3.</text>
</comment>
<comment type="subcellular location">
    <subcellularLocation>
        <location evidence="2">Cytoplasm</location>
    </subcellularLocation>
</comment>
<comment type="similarity">
    <text evidence="2">Belongs to the aspartate/ornithine carbamoyltransferase superfamily. OTCase family.</text>
</comment>
<dbReference type="EC" id="2.1.3.3" evidence="2"/>
<dbReference type="EMBL" id="CP000266">
    <property type="protein sequence ID" value="ABF06221.1"/>
    <property type="molecule type" value="Genomic_DNA"/>
</dbReference>
<dbReference type="SMR" id="Q0SXJ4"/>
<dbReference type="KEGG" id="sfv:SFV_4239"/>
<dbReference type="HOGENOM" id="CLU_043846_3_1_6"/>
<dbReference type="UniPathway" id="UPA00068">
    <property type="reaction ID" value="UER00112"/>
</dbReference>
<dbReference type="Proteomes" id="UP000000659">
    <property type="component" value="Chromosome"/>
</dbReference>
<dbReference type="GO" id="GO:0005737">
    <property type="term" value="C:cytoplasm"/>
    <property type="evidence" value="ECO:0007669"/>
    <property type="project" value="UniProtKB-SubCell"/>
</dbReference>
<dbReference type="GO" id="GO:0016597">
    <property type="term" value="F:amino acid binding"/>
    <property type="evidence" value="ECO:0007669"/>
    <property type="project" value="InterPro"/>
</dbReference>
<dbReference type="GO" id="GO:0004585">
    <property type="term" value="F:ornithine carbamoyltransferase activity"/>
    <property type="evidence" value="ECO:0007669"/>
    <property type="project" value="UniProtKB-UniRule"/>
</dbReference>
<dbReference type="GO" id="GO:0042450">
    <property type="term" value="P:arginine biosynthetic process via ornithine"/>
    <property type="evidence" value="ECO:0007669"/>
    <property type="project" value="TreeGrafter"/>
</dbReference>
<dbReference type="GO" id="GO:0019240">
    <property type="term" value="P:citrulline biosynthetic process"/>
    <property type="evidence" value="ECO:0007669"/>
    <property type="project" value="TreeGrafter"/>
</dbReference>
<dbReference type="GO" id="GO:0006526">
    <property type="term" value="P:L-arginine biosynthetic process"/>
    <property type="evidence" value="ECO:0007669"/>
    <property type="project" value="UniProtKB-UniRule"/>
</dbReference>
<dbReference type="FunFam" id="3.40.50.1370:FF:000003">
    <property type="entry name" value="Ornithine carbamoyltransferase"/>
    <property type="match status" value="1"/>
</dbReference>
<dbReference type="FunFam" id="3.40.50.1370:FF:000004">
    <property type="entry name" value="Ornithine carbamoyltransferase"/>
    <property type="match status" value="1"/>
</dbReference>
<dbReference type="Gene3D" id="3.40.50.1370">
    <property type="entry name" value="Aspartate/ornithine carbamoyltransferase"/>
    <property type="match status" value="2"/>
</dbReference>
<dbReference type="HAMAP" id="MF_01109">
    <property type="entry name" value="OTCase"/>
    <property type="match status" value="1"/>
</dbReference>
<dbReference type="InterPro" id="IPR006132">
    <property type="entry name" value="Asp/Orn_carbamoyltranf_P-bd"/>
</dbReference>
<dbReference type="InterPro" id="IPR006130">
    <property type="entry name" value="Asp/Orn_carbamoylTrfase"/>
</dbReference>
<dbReference type="InterPro" id="IPR036901">
    <property type="entry name" value="Asp/Orn_carbamoylTrfase_sf"/>
</dbReference>
<dbReference type="InterPro" id="IPR006131">
    <property type="entry name" value="Asp_carbamoyltransf_Asp/Orn-bd"/>
</dbReference>
<dbReference type="InterPro" id="IPR002292">
    <property type="entry name" value="Orn/put_carbamltrans"/>
</dbReference>
<dbReference type="InterPro" id="IPR024904">
    <property type="entry name" value="OTCase_ArgI"/>
</dbReference>
<dbReference type="NCBIfam" id="TIGR00658">
    <property type="entry name" value="orni_carb_tr"/>
    <property type="match status" value="1"/>
</dbReference>
<dbReference type="NCBIfam" id="NF009213">
    <property type="entry name" value="PRK12562.1"/>
    <property type="match status" value="1"/>
</dbReference>
<dbReference type="PANTHER" id="PTHR45753:SF4">
    <property type="entry name" value="ORNITHINE CARBAMOYLTRANSFERASE SUBUNIT F-RELATED"/>
    <property type="match status" value="1"/>
</dbReference>
<dbReference type="PANTHER" id="PTHR45753">
    <property type="entry name" value="ORNITHINE CARBAMOYLTRANSFERASE, MITOCHONDRIAL"/>
    <property type="match status" value="1"/>
</dbReference>
<dbReference type="Pfam" id="PF00185">
    <property type="entry name" value="OTCace"/>
    <property type="match status" value="1"/>
</dbReference>
<dbReference type="Pfam" id="PF02729">
    <property type="entry name" value="OTCace_N"/>
    <property type="match status" value="1"/>
</dbReference>
<dbReference type="PRINTS" id="PR00100">
    <property type="entry name" value="AOTCASE"/>
</dbReference>
<dbReference type="PRINTS" id="PR00102">
    <property type="entry name" value="OTCASE"/>
</dbReference>
<dbReference type="SUPFAM" id="SSF53671">
    <property type="entry name" value="Aspartate/ornithine carbamoyltransferase"/>
    <property type="match status" value="1"/>
</dbReference>
<dbReference type="PROSITE" id="PS00097">
    <property type="entry name" value="CARBAMOYLTRANSFERASE"/>
    <property type="match status" value="1"/>
</dbReference>
<gene>
    <name evidence="2" type="primary">argI</name>
    <name type="ordered locus">SFV_4239</name>
</gene>
<protein>
    <recommendedName>
        <fullName evidence="2">Ornithine carbamoyltransferase</fullName>
        <shortName evidence="2">OTCase</shortName>
        <ecNumber evidence="2">2.1.3.3</ecNumber>
    </recommendedName>
</protein>
<proteinExistence type="inferred from homology"/>
<accession>Q0SXJ4</accession>